<proteinExistence type="evidence at protein level"/>
<name>ORC1_SCHPO</name>
<accession>P54789</accession>
<reference key="1">
    <citation type="journal article" date="1995" name="Science">
        <title>Conserved initiator proteins in eukaryotes.</title>
        <authorList>
            <person name="Gavin K.A."/>
            <person name="Hidaka M."/>
            <person name="Stillman B.D."/>
        </authorList>
    </citation>
    <scope>NUCLEOTIDE SEQUENCE [MRNA]</scope>
</reference>
<reference key="2">
    <citation type="journal article" date="1995" name="Proc. Natl. Acad. Sci. U.S.A.">
        <title>Orp1, a member of the Cdc18/Cdc6 family of S-phase regulators, is homologous to a component of the origin recognition complex.</title>
        <authorList>
            <person name="Muzi-Falconi M."/>
            <person name="Kelly T.J."/>
        </authorList>
    </citation>
    <scope>NUCLEOTIDE SEQUENCE [GENOMIC DNA]</scope>
    <source>
        <strain>972 / ATCC 24843</strain>
    </source>
</reference>
<reference key="3">
    <citation type="journal article" date="2002" name="Nature">
        <title>The genome sequence of Schizosaccharomyces pombe.</title>
        <authorList>
            <person name="Wood V."/>
            <person name="Gwilliam R."/>
            <person name="Rajandream M.A."/>
            <person name="Lyne M.H."/>
            <person name="Lyne R."/>
            <person name="Stewart A."/>
            <person name="Sgouros J.G."/>
            <person name="Peat N."/>
            <person name="Hayles J."/>
            <person name="Baker S.G."/>
            <person name="Basham D."/>
            <person name="Bowman S."/>
            <person name="Brooks K."/>
            <person name="Brown D."/>
            <person name="Brown S."/>
            <person name="Chillingworth T."/>
            <person name="Churcher C.M."/>
            <person name="Collins M."/>
            <person name="Connor R."/>
            <person name="Cronin A."/>
            <person name="Davis P."/>
            <person name="Feltwell T."/>
            <person name="Fraser A."/>
            <person name="Gentles S."/>
            <person name="Goble A."/>
            <person name="Hamlin N."/>
            <person name="Harris D.E."/>
            <person name="Hidalgo J."/>
            <person name="Hodgson G."/>
            <person name="Holroyd S."/>
            <person name="Hornsby T."/>
            <person name="Howarth S."/>
            <person name="Huckle E.J."/>
            <person name="Hunt S."/>
            <person name="Jagels K."/>
            <person name="James K.D."/>
            <person name="Jones L."/>
            <person name="Jones M."/>
            <person name="Leather S."/>
            <person name="McDonald S."/>
            <person name="McLean J."/>
            <person name="Mooney P."/>
            <person name="Moule S."/>
            <person name="Mungall K.L."/>
            <person name="Murphy L.D."/>
            <person name="Niblett D."/>
            <person name="Odell C."/>
            <person name="Oliver K."/>
            <person name="O'Neil S."/>
            <person name="Pearson D."/>
            <person name="Quail M.A."/>
            <person name="Rabbinowitsch E."/>
            <person name="Rutherford K.M."/>
            <person name="Rutter S."/>
            <person name="Saunders D."/>
            <person name="Seeger K."/>
            <person name="Sharp S."/>
            <person name="Skelton J."/>
            <person name="Simmonds M.N."/>
            <person name="Squares R."/>
            <person name="Squares S."/>
            <person name="Stevens K."/>
            <person name="Taylor K."/>
            <person name="Taylor R.G."/>
            <person name="Tivey A."/>
            <person name="Walsh S.V."/>
            <person name="Warren T."/>
            <person name="Whitehead S."/>
            <person name="Woodward J.R."/>
            <person name="Volckaert G."/>
            <person name="Aert R."/>
            <person name="Robben J."/>
            <person name="Grymonprez B."/>
            <person name="Weltjens I."/>
            <person name="Vanstreels E."/>
            <person name="Rieger M."/>
            <person name="Schaefer M."/>
            <person name="Mueller-Auer S."/>
            <person name="Gabel C."/>
            <person name="Fuchs M."/>
            <person name="Duesterhoeft A."/>
            <person name="Fritzc C."/>
            <person name="Holzer E."/>
            <person name="Moestl D."/>
            <person name="Hilbert H."/>
            <person name="Borzym K."/>
            <person name="Langer I."/>
            <person name="Beck A."/>
            <person name="Lehrach H."/>
            <person name="Reinhardt R."/>
            <person name="Pohl T.M."/>
            <person name="Eger P."/>
            <person name="Zimmermann W."/>
            <person name="Wedler H."/>
            <person name="Wambutt R."/>
            <person name="Purnelle B."/>
            <person name="Goffeau A."/>
            <person name="Cadieu E."/>
            <person name="Dreano S."/>
            <person name="Gloux S."/>
            <person name="Lelaure V."/>
            <person name="Mottier S."/>
            <person name="Galibert F."/>
            <person name="Aves S.J."/>
            <person name="Xiang Z."/>
            <person name="Hunt C."/>
            <person name="Moore K."/>
            <person name="Hurst S.M."/>
            <person name="Lucas M."/>
            <person name="Rochet M."/>
            <person name="Gaillardin C."/>
            <person name="Tallada V.A."/>
            <person name="Garzon A."/>
            <person name="Thode G."/>
            <person name="Daga R.R."/>
            <person name="Cruzado L."/>
            <person name="Jimenez J."/>
            <person name="Sanchez M."/>
            <person name="del Rey F."/>
            <person name="Benito J."/>
            <person name="Dominguez A."/>
            <person name="Revuelta J.L."/>
            <person name="Moreno S."/>
            <person name="Armstrong J."/>
            <person name="Forsburg S.L."/>
            <person name="Cerutti L."/>
            <person name="Lowe T."/>
            <person name="McCombie W.R."/>
            <person name="Paulsen I."/>
            <person name="Potashkin J."/>
            <person name="Shpakovski G.V."/>
            <person name="Ussery D."/>
            <person name="Barrell B.G."/>
            <person name="Nurse P."/>
        </authorList>
    </citation>
    <scope>NUCLEOTIDE SEQUENCE [LARGE SCALE GENOMIC DNA]</scope>
    <source>
        <strain>972 / ATCC 24843</strain>
    </source>
</reference>
<reference key="4">
    <citation type="journal article" date="1999" name="Proc. Natl. Acad. Sci. U.S.A.">
        <title>Identification and reconstitution of the origin recognition complex from Schizosaccharomyces pombe.</title>
        <authorList>
            <person name="Moon K.-Y."/>
            <person name="Kong D."/>
            <person name="Lee J.-K."/>
            <person name="Raychaudhuri S."/>
            <person name="Hurwitz J."/>
        </authorList>
    </citation>
    <scope>SUBUNIT</scope>
</reference>
<reference key="5">
    <citation type="journal article" date="2002" name="J. Biol. Chem.">
        <title>Purification and characterization of the Schizosaccharomyces pombe origin recognition complex: interaction with origin DNA and Cdc18 protein.</title>
        <authorList>
            <person name="Chuang R.-Y."/>
            <person name="Chretien L."/>
            <person name="Dai J."/>
            <person name="Kelly T.J."/>
        </authorList>
    </citation>
    <scope>CHARACTERIZATION OF ORC</scope>
    <scope>INTERACTION WITH CDC18</scope>
</reference>
<reference key="6">
    <citation type="journal article" date="2004" name="Mol. Cell. Biol.">
        <title>The B-subunit of DNA polymerase alpha-primase associates with the origin recognition complex for initiation of DNA replication.</title>
        <authorList>
            <person name="Uchiyama M."/>
            <person name="Wang T.S."/>
        </authorList>
    </citation>
    <scope>INTERACTION WITH SPB70</scope>
    <scope>SUBCELLULAR LOCATION</scope>
</reference>
<reference key="7">
    <citation type="journal article" date="2008" name="J. Proteome Res.">
        <title>Phosphoproteome analysis of fission yeast.</title>
        <authorList>
            <person name="Wilson-Grady J.T."/>
            <person name="Villen J."/>
            <person name="Gygi S.P."/>
        </authorList>
    </citation>
    <scope>PHOSPHORYLATION [LARGE SCALE ANALYSIS] AT SER-291; THR-292 AND SER-320</scope>
    <scope>IDENTIFICATION BY MASS SPECTROMETRY</scope>
</reference>
<dbReference type="EMBL" id="U40378">
    <property type="protein sequence ID" value="AAC49141.1"/>
    <property type="molecule type" value="mRNA"/>
</dbReference>
<dbReference type="EMBL" id="U43392">
    <property type="protein sequence ID" value="AAB38247.1"/>
    <property type="molecule type" value="Genomic_DNA"/>
</dbReference>
<dbReference type="EMBL" id="U38522">
    <property type="protein sequence ID" value="AAC49129.1"/>
    <property type="molecule type" value="Genomic_DNA"/>
</dbReference>
<dbReference type="EMBL" id="CU329671">
    <property type="protein sequence ID" value="CAA22443.1"/>
    <property type="molecule type" value="Genomic_DNA"/>
</dbReference>
<dbReference type="PIR" id="T40070">
    <property type="entry name" value="T40070"/>
</dbReference>
<dbReference type="RefSeq" id="NP_596060.1">
    <property type="nucleotide sequence ID" value="NM_001021971.2"/>
</dbReference>
<dbReference type="SMR" id="P54789"/>
<dbReference type="BioGRID" id="276998">
    <property type="interactions" value="38"/>
</dbReference>
<dbReference type="FunCoup" id="P54789">
    <property type="interactions" value="220"/>
</dbReference>
<dbReference type="STRING" id="284812.P54789"/>
<dbReference type="iPTMnet" id="P54789"/>
<dbReference type="PaxDb" id="4896-SPBC29A10.15.1"/>
<dbReference type="EnsemblFungi" id="SPBC29A10.15.1">
    <property type="protein sequence ID" value="SPBC29A10.15.1:pep"/>
    <property type="gene ID" value="SPBC29A10.15"/>
</dbReference>
<dbReference type="GeneID" id="2540470"/>
<dbReference type="KEGG" id="spo:2540470"/>
<dbReference type="PomBase" id="SPBC29A10.15">
    <property type="gene designation" value="orc1"/>
</dbReference>
<dbReference type="VEuPathDB" id="FungiDB:SPBC29A10.15"/>
<dbReference type="eggNOG" id="KOG1514">
    <property type="taxonomic scope" value="Eukaryota"/>
</dbReference>
<dbReference type="HOGENOM" id="CLU_012774_1_1_1"/>
<dbReference type="InParanoid" id="P54789"/>
<dbReference type="OMA" id="YEDHPWE"/>
<dbReference type="PhylomeDB" id="P54789"/>
<dbReference type="Reactome" id="R-SPO-176187">
    <property type="pathway name" value="Activation of ATR in response to replication stress"/>
</dbReference>
<dbReference type="Reactome" id="R-SPO-68616">
    <property type="pathway name" value="Assembly of the ORC complex at the origin of replication"/>
</dbReference>
<dbReference type="Reactome" id="R-SPO-68689">
    <property type="pathway name" value="CDC6 association with the ORC:origin complex"/>
</dbReference>
<dbReference type="Reactome" id="R-SPO-68949">
    <property type="pathway name" value="Orc1 removal from chromatin"/>
</dbReference>
<dbReference type="Reactome" id="R-SPO-68962">
    <property type="pathway name" value="Activation of the pre-replicative complex"/>
</dbReference>
<dbReference type="PRO" id="PR:P54789"/>
<dbReference type="Proteomes" id="UP000002485">
    <property type="component" value="Chromosome II"/>
</dbReference>
<dbReference type="GO" id="GO:0000785">
    <property type="term" value="C:chromatin"/>
    <property type="evidence" value="ECO:0000314"/>
    <property type="project" value="PomBase"/>
</dbReference>
<dbReference type="GO" id="GO:0031261">
    <property type="term" value="C:DNA replication preinitiation complex"/>
    <property type="evidence" value="ECO:0000305"/>
    <property type="project" value="PomBase"/>
</dbReference>
<dbReference type="GO" id="GO:0005664">
    <property type="term" value="C:nuclear origin of replication recognition complex"/>
    <property type="evidence" value="ECO:0000314"/>
    <property type="project" value="UniProtKB"/>
</dbReference>
<dbReference type="GO" id="GO:0005656">
    <property type="term" value="C:nuclear pre-replicative complex"/>
    <property type="evidence" value="ECO:0000305"/>
    <property type="project" value="PomBase"/>
</dbReference>
<dbReference type="GO" id="GO:0043596">
    <property type="term" value="C:nuclear replication fork"/>
    <property type="evidence" value="ECO:0000305"/>
    <property type="project" value="PomBase"/>
</dbReference>
<dbReference type="GO" id="GO:0005634">
    <property type="term" value="C:nucleus"/>
    <property type="evidence" value="ECO:0007005"/>
    <property type="project" value="PomBase"/>
</dbReference>
<dbReference type="GO" id="GO:0005524">
    <property type="term" value="F:ATP binding"/>
    <property type="evidence" value="ECO:0000250"/>
    <property type="project" value="UniProtKB"/>
</dbReference>
<dbReference type="GO" id="GO:0016887">
    <property type="term" value="F:ATP hydrolysis activity"/>
    <property type="evidence" value="ECO:0000250"/>
    <property type="project" value="UniProtKB"/>
</dbReference>
<dbReference type="GO" id="GO:0003682">
    <property type="term" value="F:chromatin binding"/>
    <property type="evidence" value="ECO:0007669"/>
    <property type="project" value="InterPro"/>
</dbReference>
<dbReference type="GO" id="GO:0003688">
    <property type="term" value="F:DNA replication origin binding"/>
    <property type="evidence" value="ECO:0000314"/>
    <property type="project" value="UniProtKB"/>
</dbReference>
<dbReference type="GO" id="GO:0046872">
    <property type="term" value="F:metal ion binding"/>
    <property type="evidence" value="ECO:0007669"/>
    <property type="project" value="UniProtKB-KW"/>
</dbReference>
<dbReference type="GO" id="GO:0006270">
    <property type="term" value="P:DNA replication initiation"/>
    <property type="evidence" value="ECO:0000318"/>
    <property type="project" value="GO_Central"/>
</dbReference>
<dbReference type="GO" id="GO:0033314">
    <property type="term" value="P:mitotic DNA replication checkpoint signaling"/>
    <property type="evidence" value="ECO:0000316"/>
    <property type="project" value="PomBase"/>
</dbReference>
<dbReference type="GO" id="GO:0033260">
    <property type="term" value="P:nuclear DNA replication"/>
    <property type="evidence" value="ECO:0000315"/>
    <property type="project" value="PomBase"/>
</dbReference>
<dbReference type="CDD" id="cd00009">
    <property type="entry name" value="AAA"/>
    <property type="match status" value="1"/>
</dbReference>
<dbReference type="CDD" id="cd04715">
    <property type="entry name" value="BAH_Orc1p_like"/>
    <property type="match status" value="1"/>
</dbReference>
<dbReference type="FunFam" id="1.10.8.60:FF:000206">
    <property type="entry name" value="Origin recognition complex subunit 1"/>
    <property type="match status" value="1"/>
</dbReference>
<dbReference type="FunFam" id="3.40.50.300:FF:000199">
    <property type="entry name" value="Origin recognition complex subunit 1"/>
    <property type="match status" value="1"/>
</dbReference>
<dbReference type="Gene3D" id="1.10.8.60">
    <property type="match status" value="1"/>
</dbReference>
<dbReference type="Gene3D" id="2.30.30.490">
    <property type="match status" value="1"/>
</dbReference>
<dbReference type="Gene3D" id="3.40.50.300">
    <property type="entry name" value="P-loop containing nucleotide triphosphate hydrolases"/>
    <property type="match status" value="1"/>
</dbReference>
<dbReference type="InterPro" id="IPR003593">
    <property type="entry name" value="AAA+_ATPase"/>
</dbReference>
<dbReference type="InterPro" id="IPR003959">
    <property type="entry name" value="ATPase_AAA_core"/>
</dbReference>
<dbReference type="InterPro" id="IPR001025">
    <property type="entry name" value="BAH_dom"/>
</dbReference>
<dbReference type="InterPro" id="IPR043151">
    <property type="entry name" value="BAH_sf"/>
</dbReference>
<dbReference type="InterPro" id="IPR054425">
    <property type="entry name" value="Cdc6_ORC1-like_ATPase_lid"/>
</dbReference>
<dbReference type="InterPro" id="IPR050311">
    <property type="entry name" value="ORC1/CDC6"/>
</dbReference>
<dbReference type="InterPro" id="IPR027417">
    <property type="entry name" value="P-loop_NTPase"/>
</dbReference>
<dbReference type="PANTHER" id="PTHR10763">
    <property type="entry name" value="CELL DIVISION CONTROL PROTEIN 6-RELATED"/>
    <property type="match status" value="1"/>
</dbReference>
<dbReference type="PANTHER" id="PTHR10763:SF23">
    <property type="entry name" value="ORIGIN RECOGNITION COMPLEX SUBUNIT 1"/>
    <property type="match status" value="1"/>
</dbReference>
<dbReference type="Pfam" id="PF00004">
    <property type="entry name" value="AAA"/>
    <property type="match status" value="1"/>
</dbReference>
<dbReference type="Pfam" id="PF01426">
    <property type="entry name" value="BAH"/>
    <property type="match status" value="1"/>
</dbReference>
<dbReference type="Pfam" id="PF22606">
    <property type="entry name" value="Cdc6-ORC-like_ATPase_lid"/>
    <property type="match status" value="1"/>
</dbReference>
<dbReference type="SMART" id="SM00382">
    <property type="entry name" value="AAA"/>
    <property type="match status" value="1"/>
</dbReference>
<dbReference type="SMART" id="SM00439">
    <property type="entry name" value="BAH"/>
    <property type="match status" value="1"/>
</dbReference>
<dbReference type="SUPFAM" id="SSF52540">
    <property type="entry name" value="P-loop containing nucleoside triphosphate hydrolases"/>
    <property type="match status" value="1"/>
</dbReference>
<dbReference type="PROSITE" id="PS51038">
    <property type="entry name" value="BAH"/>
    <property type="match status" value="1"/>
</dbReference>
<gene>
    <name type="primary">orc1</name>
    <name evidence="8" type="synonym">orp1</name>
    <name type="ORF">SPBC29A10.15</name>
</gene>
<feature type="chain" id="PRO_0000127073" description="Origin recognition complex subunit 1">
    <location>
        <begin position="1"/>
        <end position="707"/>
    </location>
</feature>
<feature type="domain" description="BAH" evidence="2">
    <location>
        <begin position="62"/>
        <end position="193"/>
    </location>
</feature>
<feature type="region of interest" description="Disordered" evidence="3">
    <location>
        <begin position="216"/>
        <end position="302"/>
    </location>
</feature>
<feature type="compositionally biased region" description="Basic residues" evidence="3">
    <location>
        <begin position="218"/>
        <end position="233"/>
    </location>
</feature>
<feature type="compositionally biased region" description="Basic and acidic residues" evidence="3">
    <location>
        <begin position="240"/>
        <end position="254"/>
    </location>
</feature>
<feature type="compositionally biased region" description="Acidic residues" evidence="3">
    <location>
        <begin position="255"/>
        <end position="265"/>
    </location>
</feature>
<feature type="compositionally biased region" description="Basic residues" evidence="3">
    <location>
        <begin position="275"/>
        <end position="284"/>
    </location>
</feature>
<feature type="binding site" evidence="1">
    <location>
        <position position="334"/>
    </location>
    <ligand>
        <name>ATP</name>
        <dbReference type="ChEBI" id="CHEBI:30616"/>
    </ligand>
</feature>
<feature type="binding site" evidence="1">
    <location>
        <begin position="368"/>
        <end position="376"/>
    </location>
    <ligand>
        <name>ATP</name>
        <dbReference type="ChEBI" id="CHEBI:30616"/>
    </ligand>
</feature>
<feature type="binding site" evidence="1">
    <location>
        <position position="454"/>
    </location>
    <ligand>
        <name>Mg(2+)</name>
        <dbReference type="ChEBI" id="CHEBI:18420"/>
    </ligand>
</feature>
<feature type="binding site" evidence="1">
    <location>
        <position position="455"/>
    </location>
    <ligand>
        <name>ATP</name>
        <dbReference type="ChEBI" id="CHEBI:30616"/>
    </ligand>
</feature>
<feature type="binding site" evidence="1">
    <location>
        <position position="455"/>
    </location>
    <ligand>
        <name>Mg(2+)</name>
        <dbReference type="ChEBI" id="CHEBI:18420"/>
    </ligand>
</feature>
<feature type="binding site" evidence="1">
    <location>
        <position position="488"/>
    </location>
    <ligand>
        <name>ATP</name>
        <dbReference type="ChEBI" id="CHEBI:30616"/>
    </ligand>
</feature>
<feature type="binding site" evidence="1">
    <location>
        <position position="557"/>
    </location>
    <ligand>
        <name>ATP</name>
        <dbReference type="ChEBI" id="CHEBI:30616"/>
    </ligand>
</feature>
<feature type="modified residue" description="Phosphoserine" evidence="7">
    <location>
        <position position="291"/>
    </location>
</feature>
<feature type="modified residue" description="Phosphothreonine" evidence="7">
    <location>
        <position position="292"/>
    </location>
</feature>
<feature type="modified residue" description="Phosphoserine" evidence="7">
    <location>
        <position position="320"/>
    </location>
</feature>
<organism>
    <name type="scientific">Schizosaccharomyces pombe (strain 972 / ATCC 24843)</name>
    <name type="common">Fission yeast</name>
    <dbReference type="NCBI Taxonomy" id="284812"/>
    <lineage>
        <taxon>Eukaryota</taxon>
        <taxon>Fungi</taxon>
        <taxon>Dikarya</taxon>
        <taxon>Ascomycota</taxon>
        <taxon>Taphrinomycotina</taxon>
        <taxon>Schizosaccharomycetes</taxon>
        <taxon>Schizosaccharomycetales</taxon>
        <taxon>Schizosaccharomycetaceae</taxon>
        <taxon>Schizosaccharomyces</taxon>
    </lineage>
</organism>
<comment type="function">
    <text>Component of the origin recognition complex (ORC) that binds origins of replication. It has a role in both chromosomal replication and mating type transcriptional silencing. ORC binds to multiple sites within the ars1 origin of DNA replication in an ATP-independent manner.</text>
</comment>
<comment type="subunit">
    <text evidence="4 5 6">ORC is composed of six subunits. ORC interacts with cdc18, recruiting it to the ars1 origin of replication (PubMed:10535928, PubMed:11850415). Interacts with sbp70 (PubMed:15314153).</text>
</comment>
<comment type="subcellular location">
    <subcellularLocation>
        <location evidence="6">Nucleus</location>
    </subcellularLocation>
    <subcellularLocation>
        <location evidence="6">Chromosome</location>
    </subcellularLocation>
</comment>
<comment type="developmental stage">
    <text>Expressed constitutively during the cell cycle.</text>
</comment>
<comment type="similarity">
    <text evidence="9">Belongs to the ORC1 family.</text>
</comment>
<evidence type="ECO:0000250" key="1">
    <source>
        <dbReference type="UniProtKB" id="Q13415"/>
    </source>
</evidence>
<evidence type="ECO:0000255" key="2">
    <source>
        <dbReference type="PROSITE-ProRule" id="PRU00370"/>
    </source>
</evidence>
<evidence type="ECO:0000256" key="3">
    <source>
        <dbReference type="SAM" id="MobiDB-lite"/>
    </source>
</evidence>
<evidence type="ECO:0000269" key="4">
    <source>
    </source>
</evidence>
<evidence type="ECO:0000269" key="5">
    <source>
    </source>
</evidence>
<evidence type="ECO:0000269" key="6">
    <source>
    </source>
</evidence>
<evidence type="ECO:0000269" key="7">
    <source>
    </source>
</evidence>
<evidence type="ECO:0000303" key="8">
    <source>
    </source>
</evidence>
<evidence type="ECO:0000305" key="9"/>
<sequence length="707" mass="80514">MPRRKSLRSQLLINGIDKSLLSDDSADSSDIDEEEVYGVWTEEPFQKEAGRSYYRSLKKNDVIYRVGDDITVHDGDSSFYLGVICKLYEKAIDKHSGKKYVEAIWYSRAYAKRMEIKPEYLLPDRHINEVYVSCGRDENLTSCIIEHCNVYSEAEFFSKFPAGIPTKRKDLFPCNFFIRRGVHLKVNKYTEPLDWSYYAHNLERIEDLLVEMEENLRPTKKKSGSRGRGRPRKYPLPNVESKESSSKVNSKDENFDLQDDSESSEDNLTIQPQTPRRRHKRSRHNSSNLASTPKRNGYKQPLQITPLPIRMLSLEEFQGSPHRKARAMLHVASVPSTLQCRDNEFSTIFSNLESAIEEETGACLYISGTPGTGKTATVHEVIWNLQELSREGQLPEFSFCEINGMRVTSANQAYSILWESLTGERVTPIHAMDLLDNRFTHASPNRSSCVVLMDELDQLVTHNQKVLYNFFNWPSLPHSRLIVVAVANTMDLPERILSNRISSRLGLSRVPFEPYTHTQLEIIIAARLEAVRDDDVFSSDAIRFAARKVAAVSGDARRALDICRRASELAENKNGKVTPGLIHQAISEMTASPLQKVLRNLSFMQKVFLCAIVNRMRRSGFAESYVYEVLEEAERLLRVMTTPDAEAKFGELILRRPEFGYVLSSLSENGVLYLENKSSRNARVRLAIADDEIKLAFRGDSELAGIA</sequence>
<keyword id="KW-0067">ATP-binding</keyword>
<keyword id="KW-0158">Chromosome</keyword>
<keyword id="KW-0235">DNA replication</keyword>
<keyword id="KW-0238">DNA-binding</keyword>
<keyword id="KW-0460">Magnesium</keyword>
<keyword id="KW-0479">Metal-binding</keyword>
<keyword id="KW-0547">Nucleotide-binding</keyword>
<keyword id="KW-0539">Nucleus</keyword>
<keyword id="KW-0597">Phosphoprotein</keyword>
<keyword id="KW-1185">Reference proteome</keyword>
<protein>
    <recommendedName>
        <fullName>Origin recognition complex subunit 1</fullName>
    </recommendedName>
</protein>